<dbReference type="EC" id="5.4.2.10" evidence="1"/>
<dbReference type="EMBL" id="CP000825">
    <property type="protein sequence ID" value="ABV49881.1"/>
    <property type="molecule type" value="Genomic_DNA"/>
</dbReference>
<dbReference type="RefSeq" id="WP_012007044.1">
    <property type="nucleotide sequence ID" value="NC_009840.1"/>
</dbReference>
<dbReference type="SMR" id="A8G2Q0"/>
<dbReference type="STRING" id="93060.P9215_02641"/>
<dbReference type="KEGG" id="pmh:P9215_02641"/>
<dbReference type="eggNOG" id="COG1109">
    <property type="taxonomic scope" value="Bacteria"/>
</dbReference>
<dbReference type="HOGENOM" id="CLU_016950_7_0_3"/>
<dbReference type="OrthoDB" id="9806956at2"/>
<dbReference type="Proteomes" id="UP000002014">
    <property type="component" value="Chromosome"/>
</dbReference>
<dbReference type="GO" id="GO:0005829">
    <property type="term" value="C:cytosol"/>
    <property type="evidence" value="ECO:0007669"/>
    <property type="project" value="TreeGrafter"/>
</dbReference>
<dbReference type="GO" id="GO:0000287">
    <property type="term" value="F:magnesium ion binding"/>
    <property type="evidence" value="ECO:0007669"/>
    <property type="project" value="UniProtKB-UniRule"/>
</dbReference>
<dbReference type="GO" id="GO:0008966">
    <property type="term" value="F:phosphoglucosamine mutase activity"/>
    <property type="evidence" value="ECO:0007669"/>
    <property type="project" value="UniProtKB-UniRule"/>
</dbReference>
<dbReference type="GO" id="GO:0004615">
    <property type="term" value="F:phosphomannomutase activity"/>
    <property type="evidence" value="ECO:0007669"/>
    <property type="project" value="TreeGrafter"/>
</dbReference>
<dbReference type="GO" id="GO:0005975">
    <property type="term" value="P:carbohydrate metabolic process"/>
    <property type="evidence" value="ECO:0007669"/>
    <property type="project" value="InterPro"/>
</dbReference>
<dbReference type="GO" id="GO:0009252">
    <property type="term" value="P:peptidoglycan biosynthetic process"/>
    <property type="evidence" value="ECO:0007669"/>
    <property type="project" value="TreeGrafter"/>
</dbReference>
<dbReference type="GO" id="GO:0006048">
    <property type="term" value="P:UDP-N-acetylglucosamine biosynthetic process"/>
    <property type="evidence" value="ECO:0007669"/>
    <property type="project" value="TreeGrafter"/>
</dbReference>
<dbReference type="CDD" id="cd05802">
    <property type="entry name" value="GlmM"/>
    <property type="match status" value="1"/>
</dbReference>
<dbReference type="FunFam" id="3.40.120.10:FF:000001">
    <property type="entry name" value="Phosphoglucosamine mutase"/>
    <property type="match status" value="1"/>
</dbReference>
<dbReference type="Gene3D" id="3.40.120.10">
    <property type="entry name" value="Alpha-D-Glucose-1,6-Bisphosphate, subunit A, domain 3"/>
    <property type="match status" value="3"/>
</dbReference>
<dbReference type="Gene3D" id="3.30.310.50">
    <property type="entry name" value="Alpha-D-phosphohexomutase, C-terminal domain"/>
    <property type="match status" value="1"/>
</dbReference>
<dbReference type="HAMAP" id="MF_01554_B">
    <property type="entry name" value="GlmM_B"/>
    <property type="match status" value="1"/>
</dbReference>
<dbReference type="InterPro" id="IPR005844">
    <property type="entry name" value="A-D-PHexomutase_a/b/a-I"/>
</dbReference>
<dbReference type="InterPro" id="IPR016055">
    <property type="entry name" value="A-D-PHexomutase_a/b/a-I/II/III"/>
</dbReference>
<dbReference type="InterPro" id="IPR005845">
    <property type="entry name" value="A-D-PHexomutase_a/b/a-II"/>
</dbReference>
<dbReference type="InterPro" id="IPR005846">
    <property type="entry name" value="A-D-PHexomutase_a/b/a-III"/>
</dbReference>
<dbReference type="InterPro" id="IPR005843">
    <property type="entry name" value="A-D-PHexomutase_C"/>
</dbReference>
<dbReference type="InterPro" id="IPR036900">
    <property type="entry name" value="A-D-PHexomutase_C_sf"/>
</dbReference>
<dbReference type="InterPro" id="IPR016066">
    <property type="entry name" value="A-D-PHexomutase_CS"/>
</dbReference>
<dbReference type="InterPro" id="IPR005841">
    <property type="entry name" value="Alpha-D-phosphohexomutase_SF"/>
</dbReference>
<dbReference type="InterPro" id="IPR006352">
    <property type="entry name" value="GlmM_bact"/>
</dbReference>
<dbReference type="InterPro" id="IPR050060">
    <property type="entry name" value="Phosphoglucosamine_mutase"/>
</dbReference>
<dbReference type="NCBIfam" id="TIGR01455">
    <property type="entry name" value="glmM"/>
    <property type="match status" value="1"/>
</dbReference>
<dbReference type="PANTHER" id="PTHR42946:SF1">
    <property type="entry name" value="PHOSPHOGLUCOMUTASE (ALPHA-D-GLUCOSE-1,6-BISPHOSPHATE-DEPENDENT)"/>
    <property type="match status" value="1"/>
</dbReference>
<dbReference type="PANTHER" id="PTHR42946">
    <property type="entry name" value="PHOSPHOHEXOSE MUTASE"/>
    <property type="match status" value="1"/>
</dbReference>
<dbReference type="Pfam" id="PF02878">
    <property type="entry name" value="PGM_PMM_I"/>
    <property type="match status" value="1"/>
</dbReference>
<dbReference type="Pfam" id="PF02879">
    <property type="entry name" value="PGM_PMM_II"/>
    <property type="match status" value="1"/>
</dbReference>
<dbReference type="Pfam" id="PF02880">
    <property type="entry name" value="PGM_PMM_III"/>
    <property type="match status" value="1"/>
</dbReference>
<dbReference type="Pfam" id="PF00408">
    <property type="entry name" value="PGM_PMM_IV"/>
    <property type="match status" value="1"/>
</dbReference>
<dbReference type="PRINTS" id="PR00509">
    <property type="entry name" value="PGMPMM"/>
</dbReference>
<dbReference type="SUPFAM" id="SSF55957">
    <property type="entry name" value="Phosphoglucomutase, C-terminal domain"/>
    <property type="match status" value="1"/>
</dbReference>
<dbReference type="SUPFAM" id="SSF53738">
    <property type="entry name" value="Phosphoglucomutase, first 3 domains"/>
    <property type="match status" value="3"/>
</dbReference>
<dbReference type="PROSITE" id="PS00710">
    <property type="entry name" value="PGM_PMM"/>
    <property type="match status" value="1"/>
</dbReference>
<reference key="1">
    <citation type="journal article" date="2007" name="PLoS Genet.">
        <title>Patterns and implications of gene gain and loss in the evolution of Prochlorococcus.</title>
        <authorList>
            <person name="Kettler G.C."/>
            <person name="Martiny A.C."/>
            <person name="Huang K."/>
            <person name="Zucker J."/>
            <person name="Coleman M.L."/>
            <person name="Rodrigue S."/>
            <person name="Chen F."/>
            <person name="Lapidus A."/>
            <person name="Ferriera S."/>
            <person name="Johnson J."/>
            <person name="Steglich C."/>
            <person name="Church G.M."/>
            <person name="Richardson P."/>
            <person name="Chisholm S.W."/>
        </authorList>
    </citation>
    <scope>NUCLEOTIDE SEQUENCE [LARGE SCALE GENOMIC DNA]</scope>
    <source>
        <strain>MIT 9215</strain>
    </source>
</reference>
<name>GLMM_PROM2</name>
<proteinExistence type="inferred from homology"/>
<keyword id="KW-0413">Isomerase</keyword>
<keyword id="KW-0460">Magnesium</keyword>
<keyword id="KW-0479">Metal-binding</keyword>
<keyword id="KW-0597">Phosphoprotein</keyword>
<accession>A8G2Q0</accession>
<feature type="chain" id="PRO_1000068909" description="Phosphoglucosamine mutase">
    <location>
        <begin position="1"/>
        <end position="450"/>
    </location>
</feature>
<feature type="active site" description="Phosphoserine intermediate" evidence="1">
    <location>
        <position position="97"/>
    </location>
</feature>
<feature type="binding site" description="via phosphate group" evidence="1">
    <location>
        <position position="97"/>
    </location>
    <ligand>
        <name>Mg(2+)</name>
        <dbReference type="ChEBI" id="CHEBI:18420"/>
    </ligand>
</feature>
<feature type="binding site" evidence="1">
    <location>
        <position position="236"/>
    </location>
    <ligand>
        <name>Mg(2+)</name>
        <dbReference type="ChEBI" id="CHEBI:18420"/>
    </ligand>
</feature>
<feature type="binding site" evidence="1">
    <location>
        <position position="238"/>
    </location>
    <ligand>
        <name>Mg(2+)</name>
        <dbReference type="ChEBI" id="CHEBI:18420"/>
    </ligand>
</feature>
<feature type="binding site" evidence="1">
    <location>
        <position position="240"/>
    </location>
    <ligand>
        <name>Mg(2+)</name>
        <dbReference type="ChEBI" id="CHEBI:18420"/>
    </ligand>
</feature>
<feature type="modified residue" description="Phosphoserine" evidence="1">
    <location>
        <position position="97"/>
    </location>
</feature>
<evidence type="ECO:0000255" key="1">
    <source>
        <dbReference type="HAMAP-Rule" id="MF_01554"/>
    </source>
</evidence>
<comment type="function">
    <text evidence="1">Catalyzes the conversion of glucosamine-6-phosphate to glucosamine-1-phosphate.</text>
</comment>
<comment type="catalytic activity">
    <reaction evidence="1">
        <text>alpha-D-glucosamine 1-phosphate = D-glucosamine 6-phosphate</text>
        <dbReference type="Rhea" id="RHEA:23424"/>
        <dbReference type="ChEBI" id="CHEBI:58516"/>
        <dbReference type="ChEBI" id="CHEBI:58725"/>
        <dbReference type="EC" id="5.4.2.10"/>
    </reaction>
</comment>
<comment type="cofactor">
    <cofactor evidence="1">
        <name>Mg(2+)</name>
        <dbReference type="ChEBI" id="CHEBI:18420"/>
    </cofactor>
    <text evidence="1">Binds 1 Mg(2+) ion per subunit.</text>
</comment>
<comment type="PTM">
    <text evidence="1">Activated by phosphorylation.</text>
</comment>
<comment type="similarity">
    <text evidence="1">Belongs to the phosphohexose mutase family.</text>
</comment>
<protein>
    <recommendedName>
        <fullName evidence="1">Phosphoglucosamine mutase</fullName>
        <ecNumber evidence="1">5.4.2.10</ecNumber>
    </recommendedName>
</protein>
<sequence>MQSIFGTDGIRGRFNEEITYSLAYKVGYALGSTLEKEKPILIGRDTRISGDILLQAITRGLNESGKKFINLGICPTPAIPYLIKQENLSSGIMISASHNPPEYNGIKIFDHSGQKITKHFENKIQKLIEELNQNISVPRKVIPLNKNKDLMDIYIKSLIQTMGGENLSGLKIILDTCHGSATTCAKKIFQYLGADVKVINNSKNGLKINMNCGSTNLEPLKKALIESPAHMGFSFDGDADRVIGIDSKGNVLDGDHILFLWGRELMEQKILTNNLLISTQMANLGFEKAWEKIGGILYRTDVGDKYVRDAIKEKRAVLGGEQSGHILSKINNFSGDGILTALQICKYCKKKNINLNDWLKSSFEPFPQKLTNINLDFNINKLNPKTKILIDQTIENFQAIYSDNCRVYIRPSGTEPVMRVLVEAKNHDKVNSLSSEITKKLFSEINKIIN</sequence>
<gene>
    <name evidence="1" type="primary">glmM</name>
    <name type="ordered locus">P9215_02641</name>
</gene>
<organism>
    <name type="scientific">Prochlorococcus marinus (strain MIT 9215)</name>
    <dbReference type="NCBI Taxonomy" id="93060"/>
    <lineage>
        <taxon>Bacteria</taxon>
        <taxon>Bacillati</taxon>
        <taxon>Cyanobacteriota</taxon>
        <taxon>Cyanophyceae</taxon>
        <taxon>Synechococcales</taxon>
        <taxon>Prochlorococcaceae</taxon>
        <taxon>Prochlorococcus</taxon>
    </lineage>
</organism>